<accession>Q8RIK8</accession>
<protein>
    <recommendedName>
        <fullName evidence="1">Endonuclease MutS2</fullName>
        <ecNumber evidence="1">3.1.-.-</ecNumber>
    </recommendedName>
    <alternativeName>
        <fullName evidence="1">Ribosome-associated protein quality control-upstream factor</fullName>
        <shortName evidence="1">RQC-upstream factor</shortName>
        <shortName evidence="1">RqcU</shortName>
        <ecNumber evidence="1">3.6.4.-</ecNumber>
    </alternativeName>
</protein>
<evidence type="ECO:0000255" key="1">
    <source>
        <dbReference type="HAMAP-Rule" id="MF_00092"/>
    </source>
</evidence>
<reference key="1">
    <citation type="journal article" date="2002" name="J. Bacteriol.">
        <title>Genome sequence and analysis of the oral bacterium Fusobacterium nucleatum strain ATCC 25586.</title>
        <authorList>
            <person name="Kapatral V."/>
            <person name="Anderson I."/>
            <person name="Ivanova N."/>
            <person name="Reznik G."/>
            <person name="Los T."/>
            <person name="Lykidis A."/>
            <person name="Bhattacharyya A."/>
            <person name="Bartman A."/>
            <person name="Gardner W."/>
            <person name="Grechkin G."/>
            <person name="Zhu L."/>
            <person name="Vasieva O."/>
            <person name="Chu L."/>
            <person name="Kogan Y."/>
            <person name="Chaga O."/>
            <person name="Goltsman E."/>
            <person name="Bernal A."/>
            <person name="Larsen N."/>
            <person name="D'Souza M."/>
            <person name="Walunas T."/>
            <person name="Pusch G."/>
            <person name="Haselkorn R."/>
            <person name="Fonstein M."/>
            <person name="Kyrpides N.C."/>
            <person name="Overbeek R."/>
        </authorList>
    </citation>
    <scope>NUCLEOTIDE SEQUENCE [LARGE SCALE GENOMIC DNA]</scope>
    <source>
        <strain>ATCC 25586 / DSM 15643 / BCRC 10681 / CIP 101130 / JCM 8532 / KCTC 2640 / LMG 13131 / VPI 4355</strain>
    </source>
</reference>
<feature type="chain" id="PRO_1000093359" description="Endonuclease MutS2">
    <location>
        <begin position="1"/>
        <end position="778"/>
    </location>
</feature>
<feature type="domain" description="Smr" evidence="1">
    <location>
        <begin position="703"/>
        <end position="778"/>
    </location>
</feature>
<feature type="binding site" evidence="1">
    <location>
        <begin position="332"/>
        <end position="339"/>
    </location>
    <ligand>
        <name>ATP</name>
        <dbReference type="ChEBI" id="CHEBI:30616"/>
    </ligand>
</feature>
<sequence length="778" mass="88646">MNKHSFNVLEFDKLKELILANIVIDHNREVIENLEPYKDLSALNNELKTVKDFMDLLSFDGGFEAIGLRNINSLMEKIKLIGTYLEVEELWNINVNLRTVRIFKSRLDELGKYKQLREMIGNIPNLRVIEDVINKTINPEKEIKDDASLDLRDIRLHKKTLNMNIKRKFEELFEEPSLSNAFQEKIITERDGRMVTPVKYDFKGLIKGIEHDRSSSGQTVFIEPLSIVSLNNKMRELETKEKEEIRKILLRIAELLRNNKDDILIIGEKVMYLDILNAKSIYAVENRCEIPTVSNKEILSLEKARHPFIDKDKVTPLTFEIGKDYDILLITGPNTGGKTVALKTAGLLTLMALSGIPIPASENSKIGFFEGVFADIGDEQSIEQSLSSFSAHLKNVKEILEAVTKNSLVLLDELGSGTDPIEGAAFAMAVIDYLNEKKCKSFITTHYSQVKAYGYNEEGIETASMEFNTDTLSPTYRLLVGIPGESNALTIAQRMGLPESIISKAREYISEDNKKVEKMIENIKTKSQELDEMRERFARLQEEARLDRERAKQETLIIEKQKNEIIKSAYEEAEKMMNEMRAKASALVEKIQHEEKNKEDAKQIQKNLNMLSTALREEKNKTVEVVKKIKTKVNFKVGDRVFVKSINQFANILKINTSKESAMVQSGILKLEVPFDEIKIVEEKKEKVYNVNNHKKTPVRSEIDLRGKMVDEAVYELETYLDRATLNGYTEVYVIHGKGTGALREGILKYLKACKYVKEYRIGGHGEGGLGCTVVTLK</sequence>
<organism>
    <name type="scientific">Fusobacterium nucleatum subsp. nucleatum (strain ATCC 25586 / DSM 15643 / BCRC 10681 / CIP 101130 / JCM 8532 / KCTC 2640 / LMG 13131 / VPI 4355)</name>
    <dbReference type="NCBI Taxonomy" id="190304"/>
    <lineage>
        <taxon>Bacteria</taxon>
        <taxon>Fusobacteriati</taxon>
        <taxon>Fusobacteriota</taxon>
        <taxon>Fusobacteriia</taxon>
        <taxon>Fusobacteriales</taxon>
        <taxon>Fusobacteriaceae</taxon>
        <taxon>Fusobacterium</taxon>
    </lineage>
</organism>
<dbReference type="EC" id="3.1.-.-" evidence="1"/>
<dbReference type="EC" id="3.6.4.-" evidence="1"/>
<dbReference type="EMBL" id="AE009951">
    <property type="protein sequence ID" value="AAL93696.1"/>
    <property type="molecule type" value="Genomic_DNA"/>
</dbReference>
<dbReference type="RefSeq" id="NP_602397.1">
    <property type="nucleotide sequence ID" value="NC_003454.1"/>
</dbReference>
<dbReference type="RefSeq" id="WP_011015682.1">
    <property type="nucleotide sequence ID" value="NZ_CP028101.1"/>
</dbReference>
<dbReference type="SMR" id="Q8RIK8"/>
<dbReference type="FunCoup" id="Q8RIK8">
    <property type="interactions" value="107"/>
</dbReference>
<dbReference type="STRING" id="190304.FN1581"/>
<dbReference type="PaxDb" id="190304-FN1581"/>
<dbReference type="EnsemblBacteria" id="AAL93696">
    <property type="protein sequence ID" value="AAL93696"/>
    <property type="gene ID" value="FN1581"/>
</dbReference>
<dbReference type="GeneID" id="79782522"/>
<dbReference type="KEGG" id="fnu:FN1581"/>
<dbReference type="PATRIC" id="fig|190304.8.peg.73"/>
<dbReference type="eggNOG" id="COG1193">
    <property type="taxonomic scope" value="Bacteria"/>
</dbReference>
<dbReference type="HOGENOM" id="CLU_011252_2_1_0"/>
<dbReference type="InParanoid" id="Q8RIK8"/>
<dbReference type="BioCyc" id="FNUC190304:G1FZS-85-MONOMER"/>
<dbReference type="Proteomes" id="UP000002521">
    <property type="component" value="Chromosome"/>
</dbReference>
<dbReference type="GO" id="GO:0005524">
    <property type="term" value="F:ATP binding"/>
    <property type="evidence" value="ECO:0007669"/>
    <property type="project" value="UniProtKB-UniRule"/>
</dbReference>
<dbReference type="GO" id="GO:0016887">
    <property type="term" value="F:ATP hydrolysis activity"/>
    <property type="evidence" value="ECO:0007669"/>
    <property type="project" value="InterPro"/>
</dbReference>
<dbReference type="GO" id="GO:0140664">
    <property type="term" value="F:ATP-dependent DNA damage sensor activity"/>
    <property type="evidence" value="ECO:0007669"/>
    <property type="project" value="InterPro"/>
</dbReference>
<dbReference type="GO" id="GO:0003690">
    <property type="term" value="F:double-stranded DNA binding"/>
    <property type="evidence" value="ECO:0000318"/>
    <property type="project" value="GO_Central"/>
</dbReference>
<dbReference type="GO" id="GO:0004519">
    <property type="term" value="F:endonuclease activity"/>
    <property type="evidence" value="ECO:0007669"/>
    <property type="project" value="UniProtKB-UniRule"/>
</dbReference>
<dbReference type="GO" id="GO:0030983">
    <property type="term" value="F:mismatched DNA binding"/>
    <property type="evidence" value="ECO:0007669"/>
    <property type="project" value="InterPro"/>
</dbReference>
<dbReference type="GO" id="GO:0043023">
    <property type="term" value="F:ribosomal large subunit binding"/>
    <property type="evidence" value="ECO:0007669"/>
    <property type="project" value="UniProtKB-UniRule"/>
</dbReference>
<dbReference type="GO" id="GO:0019843">
    <property type="term" value="F:rRNA binding"/>
    <property type="evidence" value="ECO:0007669"/>
    <property type="project" value="UniProtKB-UniRule"/>
</dbReference>
<dbReference type="GO" id="GO:0006298">
    <property type="term" value="P:mismatch repair"/>
    <property type="evidence" value="ECO:0007669"/>
    <property type="project" value="InterPro"/>
</dbReference>
<dbReference type="GO" id="GO:0045910">
    <property type="term" value="P:negative regulation of DNA recombination"/>
    <property type="evidence" value="ECO:0007669"/>
    <property type="project" value="InterPro"/>
</dbReference>
<dbReference type="GO" id="GO:0072344">
    <property type="term" value="P:rescue of stalled ribosome"/>
    <property type="evidence" value="ECO:0007669"/>
    <property type="project" value="UniProtKB-UniRule"/>
</dbReference>
<dbReference type="CDD" id="cd03280">
    <property type="entry name" value="ABC_MutS2"/>
    <property type="match status" value="1"/>
</dbReference>
<dbReference type="FunFam" id="3.40.50.300:FF:000830">
    <property type="entry name" value="Endonuclease MutS2"/>
    <property type="match status" value="1"/>
</dbReference>
<dbReference type="Gene3D" id="3.30.1370.110">
    <property type="match status" value="1"/>
</dbReference>
<dbReference type="Gene3D" id="3.40.50.300">
    <property type="entry name" value="P-loop containing nucleotide triphosphate hydrolases"/>
    <property type="match status" value="1"/>
</dbReference>
<dbReference type="HAMAP" id="MF_00092">
    <property type="entry name" value="MutS2"/>
    <property type="match status" value="1"/>
</dbReference>
<dbReference type="InterPro" id="IPR000432">
    <property type="entry name" value="DNA_mismatch_repair_MutS_C"/>
</dbReference>
<dbReference type="InterPro" id="IPR007696">
    <property type="entry name" value="DNA_mismatch_repair_MutS_core"/>
</dbReference>
<dbReference type="InterPro" id="IPR036187">
    <property type="entry name" value="DNA_mismatch_repair_MutS_sf"/>
</dbReference>
<dbReference type="InterPro" id="IPR046893">
    <property type="entry name" value="MSSS"/>
</dbReference>
<dbReference type="InterPro" id="IPR045076">
    <property type="entry name" value="MutS"/>
</dbReference>
<dbReference type="InterPro" id="IPR005747">
    <property type="entry name" value="MutS2"/>
</dbReference>
<dbReference type="InterPro" id="IPR027417">
    <property type="entry name" value="P-loop_NTPase"/>
</dbReference>
<dbReference type="InterPro" id="IPR002625">
    <property type="entry name" value="Smr_dom"/>
</dbReference>
<dbReference type="InterPro" id="IPR036063">
    <property type="entry name" value="Smr_dom_sf"/>
</dbReference>
<dbReference type="NCBIfam" id="TIGR01069">
    <property type="entry name" value="mutS2"/>
    <property type="match status" value="1"/>
</dbReference>
<dbReference type="PANTHER" id="PTHR48466">
    <property type="entry name" value="OS10G0509000 PROTEIN-RELATED"/>
    <property type="match status" value="1"/>
</dbReference>
<dbReference type="PANTHER" id="PTHR48466:SF1">
    <property type="entry name" value="SMR DOMAIN-CONTAINING PROTEIN"/>
    <property type="match status" value="1"/>
</dbReference>
<dbReference type="Pfam" id="PF20297">
    <property type="entry name" value="MSSS"/>
    <property type="match status" value="1"/>
</dbReference>
<dbReference type="Pfam" id="PF00488">
    <property type="entry name" value="MutS_V"/>
    <property type="match status" value="1"/>
</dbReference>
<dbReference type="Pfam" id="PF01713">
    <property type="entry name" value="Smr"/>
    <property type="match status" value="1"/>
</dbReference>
<dbReference type="PIRSF" id="PIRSF005814">
    <property type="entry name" value="MutS_YshD"/>
    <property type="match status" value="1"/>
</dbReference>
<dbReference type="SMART" id="SM00534">
    <property type="entry name" value="MUTSac"/>
    <property type="match status" value="1"/>
</dbReference>
<dbReference type="SMART" id="SM00533">
    <property type="entry name" value="MUTSd"/>
    <property type="match status" value="1"/>
</dbReference>
<dbReference type="SMART" id="SM00463">
    <property type="entry name" value="SMR"/>
    <property type="match status" value="1"/>
</dbReference>
<dbReference type="SUPFAM" id="SSF48334">
    <property type="entry name" value="DNA repair protein MutS, domain III"/>
    <property type="match status" value="1"/>
</dbReference>
<dbReference type="SUPFAM" id="SSF52540">
    <property type="entry name" value="P-loop containing nucleoside triphosphate hydrolases"/>
    <property type="match status" value="1"/>
</dbReference>
<dbReference type="SUPFAM" id="SSF160443">
    <property type="entry name" value="SMR domain-like"/>
    <property type="match status" value="1"/>
</dbReference>
<dbReference type="PROSITE" id="PS00486">
    <property type="entry name" value="DNA_MISMATCH_REPAIR_2"/>
    <property type="match status" value="1"/>
</dbReference>
<dbReference type="PROSITE" id="PS50828">
    <property type="entry name" value="SMR"/>
    <property type="match status" value="1"/>
</dbReference>
<proteinExistence type="inferred from homology"/>
<comment type="function">
    <text evidence="1">Endonuclease that is involved in the suppression of homologous recombination and thus may have a key role in the control of bacterial genetic diversity.</text>
</comment>
<comment type="function">
    <text evidence="1">Acts as a ribosome collision sensor, splitting the ribosome into its 2 subunits. Detects stalled/collided 70S ribosomes which it binds and splits by an ATP-hydrolysis driven conformational change. Acts upstream of the ribosome quality control system (RQC), a ribosome-associated complex that mediates the extraction of incompletely synthesized nascent chains from stalled ribosomes and their subsequent degradation. Probably generates substrates for RQC.</text>
</comment>
<comment type="subunit">
    <text evidence="1">Homodimer. Binds to stalled ribosomes, contacting rRNA.</text>
</comment>
<comment type="similarity">
    <text evidence="1">Belongs to the DNA mismatch repair MutS family. MutS2 subfamily.</text>
</comment>
<name>MUTS2_FUSNN</name>
<keyword id="KW-0067">ATP-binding</keyword>
<keyword id="KW-0238">DNA-binding</keyword>
<keyword id="KW-0255">Endonuclease</keyword>
<keyword id="KW-0378">Hydrolase</keyword>
<keyword id="KW-0540">Nuclease</keyword>
<keyword id="KW-0547">Nucleotide-binding</keyword>
<keyword id="KW-1185">Reference proteome</keyword>
<keyword id="KW-0694">RNA-binding</keyword>
<keyword id="KW-0699">rRNA-binding</keyword>
<gene>
    <name evidence="1" type="primary">mutS2</name>
    <name evidence="1" type="synonym">rqcU</name>
    <name type="ordered locus">FN1581</name>
</gene>